<reference key="1">
    <citation type="submission" date="2004-02" db="EMBL/GenBank/DDBJ databases">
        <authorList>
            <consortium name="NIH - Zebrafish Gene Collection (ZGC) project"/>
        </authorList>
    </citation>
    <scope>NUCLEOTIDE SEQUENCE [LARGE SCALE MRNA]</scope>
    <source>
        <tissue>Kidney</tissue>
    </source>
</reference>
<organism>
    <name type="scientific">Danio rerio</name>
    <name type="common">Zebrafish</name>
    <name type="synonym">Brachydanio rerio</name>
    <dbReference type="NCBI Taxonomy" id="7955"/>
    <lineage>
        <taxon>Eukaryota</taxon>
        <taxon>Metazoa</taxon>
        <taxon>Chordata</taxon>
        <taxon>Craniata</taxon>
        <taxon>Vertebrata</taxon>
        <taxon>Euteleostomi</taxon>
        <taxon>Actinopterygii</taxon>
        <taxon>Neopterygii</taxon>
        <taxon>Teleostei</taxon>
        <taxon>Ostariophysi</taxon>
        <taxon>Cypriniformes</taxon>
        <taxon>Danionidae</taxon>
        <taxon>Danioninae</taxon>
        <taxon>Danio</taxon>
    </lineage>
</organism>
<protein>
    <recommendedName>
        <fullName>Toll-interacting protein</fullName>
    </recommendedName>
</protein>
<feature type="chain" id="PRO_0000384933" description="Toll-interacting protein">
    <location>
        <begin position="1"/>
        <end position="276"/>
    </location>
</feature>
<feature type="domain" description="C2" evidence="2">
    <location>
        <begin position="35"/>
        <end position="152"/>
    </location>
</feature>
<feature type="domain" description="CUE" evidence="3">
    <location>
        <begin position="231"/>
        <end position="274"/>
    </location>
</feature>
<feature type="short sequence motif" description="AIM1">
    <location>
        <begin position="133"/>
        <end position="136"/>
    </location>
</feature>
<feature type="short sequence motif" description="AIM2">
    <location>
        <begin position="151"/>
        <end position="154"/>
    </location>
</feature>
<feature type="sequence conflict" description="In Ref. 1; AAH66544." evidence="4" ref="1">
    <original>A</original>
    <variation>P</variation>
    <location>
        <position position="222"/>
    </location>
</feature>
<feature type="sequence conflict" description="In Ref. 1; AAH66544." evidence="4" ref="1">
    <original>A</original>
    <variation>G</variation>
    <location>
        <position position="229"/>
    </location>
</feature>
<dbReference type="EMBL" id="BC046009">
    <property type="protein sequence ID" value="AAH46009.1"/>
    <property type="molecule type" value="mRNA"/>
</dbReference>
<dbReference type="EMBL" id="BC066544">
    <property type="protein sequence ID" value="AAH66544.1"/>
    <property type="molecule type" value="mRNA"/>
</dbReference>
<dbReference type="SMR" id="Q7ZV43"/>
<dbReference type="FunCoup" id="Q7ZV43">
    <property type="interactions" value="1536"/>
</dbReference>
<dbReference type="STRING" id="7955.ENSDARP00000140869"/>
<dbReference type="PaxDb" id="7955-ENSDARP00000112313"/>
<dbReference type="AGR" id="ZFIN:ZDB-GENE-030131-8820"/>
<dbReference type="ZFIN" id="ZDB-GENE-030131-8820">
    <property type="gene designation" value="tollip"/>
</dbReference>
<dbReference type="eggNOG" id="ENOG502QWQA">
    <property type="taxonomic scope" value="Eukaryota"/>
</dbReference>
<dbReference type="InParanoid" id="Q7ZV43"/>
<dbReference type="PhylomeDB" id="Q7ZV43"/>
<dbReference type="Reactome" id="R-DRE-6798695">
    <property type="pathway name" value="Neutrophil degranulation"/>
</dbReference>
<dbReference type="PRO" id="PR:Q7ZV43"/>
<dbReference type="Proteomes" id="UP000000437">
    <property type="component" value="Unplaced"/>
</dbReference>
<dbReference type="GO" id="GO:0005737">
    <property type="term" value="C:cytoplasm"/>
    <property type="evidence" value="ECO:0000318"/>
    <property type="project" value="GO_Central"/>
</dbReference>
<dbReference type="GO" id="GO:0005769">
    <property type="term" value="C:early endosome"/>
    <property type="evidence" value="ECO:0007669"/>
    <property type="project" value="UniProtKB-SubCell"/>
</dbReference>
<dbReference type="GO" id="GO:0043130">
    <property type="term" value="F:ubiquitin binding"/>
    <property type="evidence" value="ECO:0000318"/>
    <property type="project" value="GO_Central"/>
</dbReference>
<dbReference type="GO" id="GO:0031624">
    <property type="term" value="F:ubiquitin conjugating enzyme binding"/>
    <property type="evidence" value="ECO:0000318"/>
    <property type="project" value="GO_Central"/>
</dbReference>
<dbReference type="GO" id="GO:0006914">
    <property type="term" value="P:autophagy"/>
    <property type="evidence" value="ECO:0007669"/>
    <property type="project" value="UniProtKB-KW"/>
</dbReference>
<dbReference type="GO" id="GO:0006954">
    <property type="term" value="P:inflammatory response"/>
    <property type="evidence" value="ECO:0007669"/>
    <property type="project" value="UniProtKB-KW"/>
</dbReference>
<dbReference type="GO" id="GO:0045087">
    <property type="term" value="P:innate immune response"/>
    <property type="evidence" value="ECO:0007669"/>
    <property type="project" value="UniProtKB-KW"/>
</dbReference>
<dbReference type="GO" id="GO:0030178">
    <property type="term" value="P:negative regulation of Wnt signaling pathway"/>
    <property type="evidence" value="ECO:0000315"/>
    <property type="project" value="ZFIN"/>
</dbReference>
<dbReference type="GO" id="GO:0016310">
    <property type="term" value="P:phosphorylation"/>
    <property type="evidence" value="ECO:0000250"/>
    <property type="project" value="UniProtKB"/>
</dbReference>
<dbReference type="GO" id="GO:0006511">
    <property type="term" value="P:ubiquitin-dependent protein catabolic process"/>
    <property type="evidence" value="ECO:0000318"/>
    <property type="project" value="GO_Central"/>
</dbReference>
<dbReference type="CDD" id="cd04016">
    <property type="entry name" value="C2_Tollip"/>
    <property type="match status" value="1"/>
</dbReference>
<dbReference type="CDD" id="cd14363">
    <property type="entry name" value="CUE_TOLIP"/>
    <property type="match status" value="1"/>
</dbReference>
<dbReference type="FunFam" id="1.10.8.10:FF:000036">
    <property type="entry name" value="Toll-interacting protein-like Protein"/>
    <property type="match status" value="1"/>
</dbReference>
<dbReference type="FunFam" id="2.60.40.150:FF:000055">
    <property type="entry name" value="Toll-interacting protein-like Protein"/>
    <property type="match status" value="1"/>
</dbReference>
<dbReference type="Gene3D" id="2.60.40.150">
    <property type="entry name" value="C2 domain"/>
    <property type="match status" value="1"/>
</dbReference>
<dbReference type="Gene3D" id="1.10.8.10">
    <property type="entry name" value="DNA helicase RuvA subunit, C-terminal domain"/>
    <property type="match status" value="1"/>
</dbReference>
<dbReference type="InterPro" id="IPR000008">
    <property type="entry name" value="C2_dom"/>
</dbReference>
<dbReference type="InterPro" id="IPR035892">
    <property type="entry name" value="C2_domain_sf"/>
</dbReference>
<dbReference type="InterPro" id="IPR003892">
    <property type="entry name" value="CUE"/>
</dbReference>
<dbReference type="InterPro" id="IPR041799">
    <property type="entry name" value="TOLIP_CUE"/>
</dbReference>
<dbReference type="InterPro" id="IPR037301">
    <property type="entry name" value="Tollip_C2"/>
</dbReference>
<dbReference type="InterPro" id="IPR009060">
    <property type="entry name" value="UBA-like_sf"/>
</dbReference>
<dbReference type="PANTHER" id="PTHR16461">
    <property type="entry name" value="TOLL-INTERACTING PROTEIN"/>
    <property type="match status" value="1"/>
</dbReference>
<dbReference type="PANTHER" id="PTHR16461:SF5">
    <property type="entry name" value="TOLL-INTERACTING PROTEIN"/>
    <property type="match status" value="1"/>
</dbReference>
<dbReference type="Pfam" id="PF00168">
    <property type="entry name" value="C2"/>
    <property type="match status" value="1"/>
</dbReference>
<dbReference type="Pfam" id="PF02845">
    <property type="entry name" value="CUE"/>
    <property type="match status" value="1"/>
</dbReference>
<dbReference type="SMART" id="SM00239">
    <property type="entry name" value="C2"/>
    <property type="match status" value="1"/>
</dbReference>
<dbReference type="SMART" id="SM00546">
    <property type="entry name" value="CUE"/>
    <property type="match status" value="1"/>
</dbReference>
<dbReference type="SUPFAM" id="SSF49562">
    <property type="entry name" value="C2 domain (Calcium/lipid-binding domain, CaLB)"/>
    <property type="match status" value="1"/>
</dbReference>
<dbReference type="SUPFAM" id="SSF46934">
    <property type="entry name" value="UBA-like"/>
    <property type="match status" value="1"/>
</dbReference>
<dbReference type="PROSITE" id="PS50004">
    <property type="entry name" value="C2"/>
    <property type="match status" value="1"/>
</dbReference>
<dbReference type="PROSITE" id="PS51140">
    <property type="entry name" value="CUE"/>
    <property type="match status" value="1"/>
</dbReference>
<keyword id="KW-0072">Autophagy</keyword>
<keyword id="KW-0963">Cytoplasm</keyword>
<keyword id="KW-0967">Endosome</keyword>
<keyword id="KW-0391">Immunity</keyword>
<keyword id="KW-0395">Inflammatory response</keyword>
<keyword id="KW-0399">Innate immunity</keyword>
<keyword id="KW-1185">Reference proteome</keyword>
<keyword id="KW-0677">Repeat</keyword>
<sequence>MATTISTQRGQVYIGELPQDFLRIMPTQQQQQVQLDAQAARQLQYGGSLGTAGRLSITVVQAKLAKNYGMTRMDPYCRIRLGYAVYETPTAHNGAKNPRWNKVIQCTVPPGVDSFYLEIFDERAFSMDDRIAWTHVTIPENLREGTVVDEWYSLSGRQGDDKEGMINLVMSFATIPAGMMMQPQPVVLMPTVYQQGVGYVPIAGVPGMYNQGVVPMGMPAAAPVASQSAPCSEEDLKALQDMFPNLDKEVIRTVLEAQQGNKDAAINSLLQMAEEL</sequence>
<accession>Q7ZV43</accession>
<accession>Q6NYL4</accession>
<comment type="function">
    <text evidence="1">Component of the signaling pathway of IL-1 and Toll-like receptors. Inhibits cell activation by microbial products. Connects the ubiquitin pathway to autophagy by functioning as a ubiquitin-ATG8 family adapter and thus mediating autophagic clearance of ubiquitin conjugates. The TOLLIP-dependent selective autophagy pathway plays an important role in clearance of cytotoxic polyQ proteins aggregates (By similarity). In a complex with TOM1, recruits ubiquitin-conjugated proteins onto early endosomes (By similarity). Binds to phosphatidylinositol 3-phosphate (PtdIns(3)P) (By similarity).</text>
</comment>
<comment type="subunit">
    <text evidence="1">Oligomerizes (By similarity). Interacts with ATG8 family proteins (via AIM motifs), and ubiquitin (via CUE domain). Found in a complex with TOM1; interacts (via N-terminus) with TOM1 (via GAT domain); the interactions leads to TOM1-recruitment to endosomes and inhibition of TOLLIP binding to PtdIns(3)P (By similarity).</text>
</comment>
<comment type="subcellular location">
    <subcellularLocation>
        <location evidence="1">Cytoplasm</location>
    </subcellularLocation>
    <subcellularLocation>
        <location evidence="1">Endosome</location>
    </subcellularLocation>
    <subcellularLocation>
        <location evidence="1">Early endosome</location>
    </subcellularLocation>
    <text evidence="1">Localized to endo/exosomal vesicles.</text>
</comment>
<comment type="domain">
    <text evidence="1">Both ATG8-interaction motifs (AIM1 and AIM2) are required for the association with ATG8 family proteins.</text>
</comment>
<comment type="domain">
    <text evidence="1">The N-terminal TOM1-binding domain (residues 1-53) is a disordered domain that partially folds when bound to the GAT domain of TOM1.</text>
</comment>
<comment type="similarity">
    <text evidence="4">Belongs to the tollip family.</text>
</comment>
<name>TOLIP_DANRE</name>
<proteinExistence type="evidence at transcript level"/>
<gene>
    <name type="primary">tollip</name>
    <name type="ORF">zgc:76985</name>
</gene>
<evidence type="ECO:0000250" key="1">
    <source>
        <dbReference type="UniProtKB" id="Q9H0E2"/>
    </source>
</evidence>
<evidence type="ECO:0000255" key="2">
    <source>
        <dbReference type="PROSITE-ProRule" id="PRU00041"/>
    </source>
</evidence>
<evidence type="ECO:0000255" key="3">
    <source>
        <dbReference type="PROSITE-ProRule" id="PRU00468"/>
    </source>
</evidence>
<evidence type="ECO:0000305" key="4"/>